<sequence length="283" mass="32761">MTNIQTWIDEYHKGSRFGLNGDVLIKQKSQYQEIIVIENEYYGRALMLDGCWMTSLKDEKYYHECLVHPALSSIDEKSNVLIIGGGDGGTVRECVKYAQISKIDLVEIDEEVIKISKKFLKEIGGEAWHDKRLEIHVDDGVKWVKKTRDNYYDVIFIDCSDPSEFSNLLFSDSFYKECKRILTPKGILATQSESPESFKNIHINILKTLKNIFKVSETMYSFVPIYPSGIWSWTFASSEDLNLSKQNYDEILKIEKGCEIWNLNFQNAAFKMMPNKIIKELDS</sequence>
<gene>
    <name evidence="1" type="primary">speE</name>
    <name type="ordered locus">P9301_18761</name>
</gene>
<proteinExistence type="inferred from homology"/>
<evidence type="ECO:0000255" key="1">
    <source>
        <dbReference type="HAMAP-Rule" id="MF_00198"/>
    </source>
</evidence>
<comment type="function">
    <text evidence="1">Catalyzes the irreversible transfer of a propylamine group from the amino donor S-adenosylmethioninamine (decarboxy-AdoMet) to putrescine (1,4-diaminobutane) to yield spermidine.</text>
</comment>
<comment type="catalytic activity">
    <reaction evidence="1">
        <text>S-adenosyl 3-(methylsulfanyl)propylamine + putrescine = S-methyl-5'-thioadenosine + spermidine + H(+)</text>
        <dbReference type="Rhea" id="RHEA:12721"/>
        <dbReference type="ChEBI" id="CHEBI:15378"/>
        <dbReference type="ChEBI" id="CHEBI:17509"/>
        <dbReference type="ChEBI" id="CHEBI:57443"/>
        <dbReference type="ChEBI" id="CHEBI:57834"/>
        <dbReference type="ChEBI" id="CHEBI:326268"/>
        <dbReference type="EC" id="2.5.1.16"/>
    </reaction>
</comment>
<comment type="pathway">
    <text evidence="1">Amine and polyamine biosynthesis; spermidine biosynthesis; spermidine from putrescine: step 1/1.</text>
</comment>
<comment type="subunit">
    <text evidence="1">Homodimer or homotetramer.</text>
</comment>
<comment type="subcellular location">
    <subcellularLocation>
        <location evidence="1">Cytoplasm</location>
    </subcellularLocation>
</comment>
<comment type="similarity">
    <text evidence="1">Belongs to the spermidine/spermine synthase family.</text>
</comment>
<organism>
    <name type="scientific">Prochlorococcus marinus (strain MIT 9301)</name>
    <dbReference type="NCBI Taxonomy" id="167546"/>
    <lineage>
        <taxon>Bacteria</taxon>
        <taxon>Bacillati</taxon>
        <taxon>Cyanobacteriota</taxon>
        <taxon>Cyanophyceae</taxon>
        <taxon>Synechococcales</taxon>
        <taxon>Prochlorococcaceae</taxon>
        <taxon>Prochlorococcus</taxon>
    </lineage>
</organism>
<keyword id="KW-0963">Cytoplasm</keyword>
<keyword id="KW-0620">Polyamine biosynthesis</keyword>
<keyword id="KW-1185">Reference proteome</keyword>
<keyword id="KW-0745">Spermidine biosynthesis</keyword>
<keyword id="KW-0808">Transferase</keyword>
<name>SPEE_PROM0</name>
<feature type="chain" id="PRO_1000012005" description="Polyamine aminopropyltransferase">
    <location>
        <begin position="1"/>
        <end position="283"/>
    </location>
</feature>
<feature type="domain" description="PABS" evidence="1">
    <location>
        <begin position="5"/>
        <end position="238"/>
    </location>
</feature>
<feature type="active site" description="Proton acceptor" evidence="1">
    <location>
        <position position="158"/>
    </location>
</feature>
<feature type="binding site" evidence="1">
    <location>
        <position position="32"/>
    </location>
    <ligand>
        <name>S-methyl-5'-thioadenosine</name>
        <dbReference type="ChEBI" id="CHEBI:17509"/>
    </ligand>
</feature>
<feature type="binding site" evidence="1">
    <location>
        <position position="63"/>
    </location>
    <ligand>
        <name>spermidine</name>
        <dbReference type="ChEBI" id="CHEBI:57834"/>
    </ligand>
</feature>
<feature type="binding site" evidence="1">
    <location>
        <position position="87"/>
    </location>
    <ligand>
        <name>spermidine</name>
        <dbReference type="ChEBI" id="CHEBI:57834"/>
    </ligand>
</feature>
<feature type="binding site" evidence="1">
    <location>
        <position position="107"/>
    </location>
    <ligand>
        <name>S-methyl-5'-thioadenosine</name>
        <dbReference type="ChEBI" id="CHEBI:17509"/>
    </ligand>
</feature>
<feature type="binding site" evidence="1">
    <location>
        <begin position="139"/>
        <end position="140"/>
    </location>
    <ligand>
        <name>S-methyl-5'-thioadenosine</name>
        <dbReference type="ChEBI" id="CHEBI:17509"/>
    </ligand>
</feature>
<feature type="binding site" evidence="1">
    <location>
        <begin position="158"/>
        <end position="161"/>
    </location>
    <ligand>
        <name>spermidine</name>
        <dbReference type="ChEBI" id="CHEBI:57834"/>
    </ligand>
</feature>
<dbReference type="EC" id="2.5.1.16" evidence="1"/>
<dbReference type="EMBL" id="CP000576">
    <property type="protein sequence ID" value="ABO18499.1"/>
    <property type="molecule type" value="Genomic_DNA"/>
</dbReference>
<dbReference type="RefSeq" id="WP_011863781.1">
    <property type="nucleotide sequence ID" value="NC_009091.1"/>
</dbReference>
<dbReference type="SMR" id="A3PFH4"/>
<dbReference type="STRING" id="167546.P9301_18761"/>
<dbReference type="KEGG" id="pmg:P9301_18761"/>
<dbReference type="eggNOG" id="COG0421">
    <property type="taxonomic scope" value="Bacteria"/>
</dbReference>
<dbReference type="HOGENOM" id="CLU_048199_0_0_3"/>
<dbReference type="OrthoDB" id="9793120at2"/>
<dbReference type="UniPathway" id="UPA00248">
    <property type="reaction ID" value="UER00314"/>
</dbReference>
<dbReference type="Proteomes" id="UP000001430">
    <property type="component" value="Chromosome"/>
</dbReference>
<dbReference type="GO" id="GO:0005737">
    <property type="term" value="C:cytoplasm"/>
    <property type="evidence" value="ECO:0007669"/>
    <property type="project" value="UniProtKB-SubCell"/>
</dbReference>
<dbReference type="GO" id="GO:0004766">
    <property type="term" value="F:spermidine synthase activity"/>
    <property type="evidence" value="ECO:0007669"/>
    <property type="project" value="UniProtKB-UniRule"/>
</dbReference>
<dbReference type="GO" id="GO:0008295">
    <property type="term" value="P:spermidine biosynthetic process"/>
    <property type="evidence" value="ECO:0007669"/>
    <property type="project" value="UniProtKB-UniRule"/>
</dbReference>
<dbReference type="CDD" id="cd02440">
    <property type="entry name" value="AdoMet_MTases"/>
    <property type="match status" value="1"/>
</dbReference>
<dbReference type="Gene3D" id="2.30.140.10">
    <property type="entry name" value="Spermidine synthase, tetramerisation domain"/>
    <property type="match status" value="1"/>
</dbReference>
<dbReference type="Gene3D" id="3.40.50.150">
    <property type="entry name" value="Vaccinia Virus protein VP39"/>
    <property type="match status" value="1"/>
</dbReference>
<dbReference type="HAMAP" id="MF_00198">
    <property type="entry name" value="Spermidine_synth"/>
    <property type="match status" value="1"/>
</dbReference>
<dbReference type="InterPro" id="IPR030374">
    <property type="entry name" value="PABS"/>
</dbReference>
<dbReference type="InterPro" id="IPR030373">
    <property type="entry name" value="PABS_CS"/>
</dbReference>
<dbReference type="InterPro" id="IPR029063">
    <property type="entry name" value="SAM-dependent_MTases_sf"/>
</dbReference>
<dbReference type="InterPro" id="IPR001045">
    <property type="entry name" value="Spermi_synthase"/>
</dbReference>
<dbReference type="InterPro" id="IPR035246">
    <property type="entry name" value="Spermidine_synt_N"/>
</dbReference>
<dbReference type="InterPro" id="IPR037163">
    <property type="entry name" value="Spermidine_synt_N_sf"/>
</dbReference>
<dbReference type="NCBIfam" id="NF002010">
    <property type="entry name" value="PRK00811.1"/>
    <property type="match status" value="1"/>
</dbReference>
<dbReference type="PANTHER" id="PTHR11558:SF11">
    <property type="entry name" value="SPERMIDINE SYNTHASE"/>
    <property type="match status" value="1"/>
</dbReference>
<dbReference type="PANTHER" id="PTHR11558">
    <property type="entry name" value="SPERMIDINE/SPERMINE SYNTHASE"/>
    <property type="match status" value="1"/>
</dbReference>
<dbReference type="Pfam" id="PF17284">
    <property type="entry name" value="Spermine_synt_N"/>
    <property type="match status" value="1"/>
</dbReference>
<dbReference type="Pfam" id="PF01564">
    <property type="entry name" value="Spermine_synth"/>
    <property type="match status" value="1"/>
</dbReference>
<dbReference type="SUPFAM" id="SSF53335">
    <property type="entry name" value="S-adenosyl-L-methionine-dependent methyltransferases"/>
    <property type="match status" value="1"/>
</dbReference>
<dbReference type="PROSITE" id="PS01330">
    <property type="entry name" value="PABS_1"/>
    <property type="match status" value="1"/>
</dbReference>
<dbReference type="PROSITE" id="PS51006">
    <property type="entry name" value="PABS_2"/>
    <property type="match status" value="1"/>
</dbReference>
<protein>
    <recommendedName>
        <fullName evidence="1">Polyamine aminopropyltransferase</fullName>
    </recommendedName>
    <alternativeName>
        <fullName evidence="1">Putrescine aminopropyltransferase</fullName>
        <shortName evidence="1">PAPT</shortName>
    </alternativeName>
    <alternativeName>
        <fullName evidence="1">Spermidine synthase</fullName>
        <shortName evidence="1">SPDS</shortName>
        <shortName evidence="1">SPDSY</shortName>
        <ecNumber evidence="1">2.5.1.16</ecNumber>
    </alternativeName>
</protein>
<reference key="1">
    <citation type="journal article" date="2007" name="PLoS Genet.">
        <title>Patterns and implications of gene gain and loss in the evolution of Prochlorococcus.</title>
        <authorList>
            <person name="Kettler G.C."/>
            <person name="Martiny A.C."/>
            <person name="Huang K."/>
            <person name="Zucker J."/>
            <person name="Coleman M.L."/>
            <person name="Rodrigue S."/>
            <person name="Chen F."/>
            <person name="Lapidus A."/>
            <person name="Ferriera S."/>
            <person name="Johnson J."/>
            <person name="Steglich C."/>
            <person name="Church G.M."/>
            <person name="Richardson P."/>
            <person name="Chisholm S.W."/>
        </authorList>
    </citation>
    <scope>NUCLEOTIDE SEQUENCE [LARGE SCALE GENOMIC DNA]</scope>
    <source>
        <strain>MIT 9301</strain>
    </source>
</reference>
<accession>A3PFH4</accession>